<name>URE1_SACD2</name>
<accession>Q21P94</accession>
<organism>
    <name type="scientific">Saccharophagus degradans (strain 2-40 / ATCC 43961 / DSM 17024)</name>
    <dbReference type="NCBI Taxonomy" id="203122"/>
    <lineage>
        <taxon>Bacteria</taxon>
        <taxon>Pseudomonadati</taxon>
        <taxon>Pseudomonadota</taxon>
        <taxon>Gammaproteobacteria</taxon>
        <taxon>Cellvibrionales</taxon>
        <taxon>Cellvibrionaceae</taxon>
        <taxon>Saccharophagus</taxon>
    </lineage>
</organism>
<keyword id="KW-0963">Cytoplasm</keyword>
<keyword id="KW-0378">Hydrolase</keyword>
<keyword id="KW-0479">Metal-binding</keyword>
<keyword id="KW-0533">Nickel</keyword>
<keyword id="KW-1185">Reference proteome</keyword>
<comment type="catalytic activity">
    <reaction evidence="1">
        <text>urea + 2 H2O + H(+) = hydrogencarbonate + 2 NH4(+)</text>
        <dbReference type="Rhea" id="RHEA:20557"/>
        <dbReference type="ChEBI" id="CHEBI:15377"/>
        <dbReference type="ChEBI" id="CHEBI:15378"/>
        <dbReference type="ChEBI" id="CHEBI:16199"/>
        <dbReference type="ChEBI" id="CHEBI:17544"/>
        <dbReference type="ChEBI" id="CHEBI:28938"/>
        <dbReference type="EC" id="3.5.1.5"/>
    </reaction>
</comment>
<comment type="cofactor">
    <cofactor evidence="1">
        <name>Ni cation</name>
        <dbReference type="ChEBI" id="CHEBI:25516"/>
    </cofactor>
    <text evidence="1">Binds 2 nickel ions per subunit.</text>
</comment>
<comment type="pathway">
    <text evidence="1">Nitrogen metabolism; urea degradation; CO(2) and NH(3) from urea (urease route): step 1/1.</text>
</comment>
<comment type="subunit">
    <text evidence="1">Heterotrimer of UreA (gamma), UreB (beta) and UreC (alpha) subunits. Three heterotrimers associate to form the active enzyme.</text>
</comment>
<comment type="subcellular location">
    <subcellularLocation>
        <location evidence="1">Cytoplasm</location>
    </subcellularLocation>
</comment>
<comment type="PTM">
    <text evidence="1">Carboxylation allows a single lysine to coordinate two nickel ions.</text>
</comment>
<comment type="similarity">
    <text evidence="1">Belongs to the metallo-dependent hydrolases superfamily. Urease alpha subunit family.</text>
</comment>
<protein>
    <recommendedName>
        <fullName evidence="1">Urease subunit alpha</fullName>
        <ecNumber evidence="1">3.5.1.5</ecNumber>
    </recommendedName>
    <alternativeName>
        <fullName evidence="1">Urea amidohydrolase subunit alpha</fullName>
    </alternativeName>
</protein>
<sequence>MSKISRRAYADMYGPTVGDKVRLADTALWIQVEKDFTIYGEEVKFGGGKVIRDGMGQSQATSDKTPDTVITNALILDHWGIVKADVAIKNGRISAIGKAGNPDIQPGVTIIVGPCTEVIAGEGQILTAGAIDSHIHFICPQQIDEALMSGTTTMIGGGTGPATGTNATTCTPGKWHIGKMLQAGESFAMNLGFLGKGNASLPGGLNEQLEAGALGLKLHEDWGTTPASIDNCLTVAENYDVQVAIHTDTLNESGFVEDTLAAFKGRTIHTYHTEGAGGGHAPDIIKACGSSNVLPSSTNPTRPYTVNTVDEHLDMLMVCHHLDPNIPEDVAFADSRIRKETIAAEDILHDLGAFSMIASDSQAMGRVGEVICRTWQTAHKMKVQRGLLPEDEGTGADNFRAKRYIAKYTINPALAHGVAHEVGSIEVGKLADIILWKPAFFGVKPSLIIKGGAIAAAPMGDPNASIPTPQPVHYRKMFGAYGQACKQTSVSFVSQAAIDASISDYFQLERRLVAVKNCRSVTKADMVHNAYQPHMEVDPETYEVRADGQLLTCEPAEELPMAQRYFLF</sequence>
<evidence type="ECO:0000255" key="1">
    <source>
        <dbReference type="HAMAP-Rule" id="MF_01953"/>
    </source>
</evidence>
<proteinExistence type="inferred from homology"/>
<reference key="1">
    <citation type="journal article" date="2008" name="PLoS Genet.">
        <title>Complete genome sequence of the complex carbohydrate-degrading marine bacterium, Saccharophagus degradans strain 2-40 T.</title>
        <authorList>
            <person name="Weiner R.M."/>
            <person name="Taylor L.E. II"/>
            <person name="Henrissat B."/>
            <person name="Hauser L."/>
            <person name="Land M."/>
            <person name="Coutinho P.M."/>
            <person name="Rancurel C."/>
            <person name="Saunders E.H."/>
            <person name="Longmire A.G."/>
            <person name="Zhang H."/>
            <person name="Bayer E.A."/>
            <person name="Gilbert H.J."/>
            <person name="Larimer F."/>
            <person name="Zhulin I.B."/>
            <person name="Ekborg N.A."/>
            <person name="Lamed R."/>
            <person name="Richardson P.M."/>
            <person name="Borovok I."/>
            <person name="Hutcheson S."/>
        </authorList>
    </citation>
    <scope>NUCLEOTIDE SEQUENCE [LARGE SCALE GENOMIC DNA]</scope>
    <source>
        <strain>2-40 / ATCC 43961 / DSM 17024</strain>
    </source>
</reference>
<gene>
    <name evidence="1" type="primary">ureC</name>
    <name type="ordered locus">Sde_0221</name>
</gene>
<feature type="chain" id="PRO_0000239886" description="Urease subunit alpha">
    <location>
        <begin position="1"/>
        <end position="568"/>
    </location>
</feature>
<feature type="domain" description="Urease" evidence="1">
    <location>
        <begin position="129"/>
        <end position="568"/>
    </location>
</feature>
<feature type="active site" description="Proton donor" evidence="1">
    <location>
        <position position="320"/>
    </location>
</feature>
<feature type="binding site" evidence="1">
    <location>
        <position position="134"/>
    </location>
    <ligand>
        <name>Ni(2+)</name>
        <dbReference type="ChEBI" id="CHEBI:49786"/>
        <label>1</label>
    </ligand>
</feature>
<feature type="binding site" evidence="1">
    <location>
        <position position="136"/>
    </location>
    <ligand>
        <name>Ni(2+)</name>
        <dbReference type="ChEBI" id="CHEBI:49786"/>
        <label>1</label>
    </ligand>
</feature>
<feature type="binding site" description="via carbamate group" evidence="1">
    <location>
        <position position="217"/>
    </location>
    <ligand>
        <name>Ni(2+)</name>
        <dbReference type="ChEBI" id="CHEBI:49786"/>
        <label>1</label>
    </ligand>
</feature>
<feature type="binding site" description="via carbamate group" evidence="1">
    <location>
        <position position="217"/>
    </location>
    <ligand>
        <name>Ni(2+)</name>
        <dbReference type="ChEBI" id="CHEBI:49786"/>
        <label>2</label>
    </ligand>
</feature>
<feature type="binding site" evidence="1">
    <location>
        <position position="219"/>
    </location>
    <ligand>
        <name>substrate</name>
    </ligand>
</feature>
<feature type="binding site" evidence="1">
    <location>
        <position position="246"/>
    </location>
    <ligand>
        <name>Ni(2+)</name>
        <dbReference type="ChEBI" id="CHEBI:49786"/>
        <label>2</label>
    </ligand>
</feature>
<feature type="binding site" evidence="1">
    <location>
        <position position="272"/>
    </location>
    <ligand>
        <name>Ni(2+)</name>
        <dbReference type="ChEBI" id="CHEBI:49786"/>
        <label>2</label>
    </ligand>
</feature>
<feature type="binding site" evidence="1">
    <location>
        <position position="360"/>
    </location>
    <ligand>
        <name>Ni(2+)</name>
        <dbReference type="ChEBI" id="CHEBI:49786"/>
        <label>1</label>
    </ligand>
</feature>
<feature type="modified residue" description="N6-carboxylysine" evidence="1">
    <location>
        <position position="217"/>
    </location>
</feature>
<dbReference type="EC" id="3.5.1.5" evidence="1"/>
<dbReference type="EMBL" id="CP000282">
    <property type="protein sequence ID" value="ABD79485.1"/>
    <property type="molecule type" value="Genomic_DNA"/>
</dbReference>
<dbReference type="RefSeq" id="WP_011466709.1">
    <property type="nucleotide sequence ID" value="NC_007912.1"/>
</dbReference>
<dbReference type="SMR" id="Q21P94"/>
<dbReference type="STRING" id="203122.Sde_0221"/>
<dbReference type="MEROPS" id="M38.982"/>
<dbReference type="GeneID" id="98611927"/>
<dbReference type="KEGG" id="sde:Sde_0221"/>
<dbReference type="eggNOG" id="COG0804">
    <property type="taxonomic scope" value="Bacteria"/>
</dbReference>
<dbReference type="HOGENOM" id="CLU_000980_0_0_6"/>
<dbReference type="OrthoDB" id="9802793at2"/>
<dbReference type="UniPathway" id="UPA00258">
    <property type="reaction ID" value="UER00370"/>
</dbReference>
<dbReference type="Proteomes" id="UP000001947">
    <property type="component" value="Chromosome"/>
</dbReference>
<dbReference type="GO" id="GO:0005737">
    <property type="term" value="C:cytoplasm"/>
    <property type="evidence" value="ECO:0007669"/>
    <property type="project" value="UniProtKB-SubCell"/>
</dbReference>
<dbReference type="GO" id="GO:0016151">
    <property type="term" value="F:nickel cation binding"/>
    <property type="evidence" value="ECO:0007669"/>
    <property type="project" value="UniProtKB-UniRule"/>
</dbReference>
<dbReference type="GO" id="GO:0009039">
    <property type="term" value="F:urease activity"/>
    <property type="evidence" value="ECO:0007669"/>
    <property type="project" value="UniProtKB-UniRule"/>
</dbReference>
<dbReference type="GO" id="GO:0043419">
    <property type="term" value="P:urea catabolic process"/>
    <property type="evidence" value="ECO:0007669"/>
    <property type="project" value="UniProtKB-UniRule"/>
</dbReference>
<dbReference type="CDD" id="cd00375">
    <property type="entry name" value="Urease_alpha"/>
    <property type="match status" value="1"/>
</dbReference>
<dbReference type="Gene3D" id="3.20.20.140">
    <property type="entry name" value="Metal-dependent hydrolases"/>
    <property type="match status" value="1"/>
</dbReference>
<dbReference type="Gene3D" id="2.30.40.10">
    <property type="entry name" value="Urease, subunit C, domain 1"/>
    <property type="match status" value="1"/>
</dbReference>
<dbReference type="HAMAP" id="MF_01953">
    <property type="entry name" value="Urease_alpha"/>
    <property type="match status" value="1"/>
</dbReference>
<dbReference type="InterPro" id="IPR006680">
    <property type="entry name" value="Amidohydro-rel"/>
</dbReference>
<dbReference type="InterPro" id="IPR011059">
    <property type="entry name" value="Metal-dep_hydrolase_composite"/>
</dbReference>
<dbReference type="InterPro" id="IPR032466">
    <property type="entry name" value="Metal_Hydrolase"/>
</dbReference>
<dbReference type="InterPro" id="IPR011612">
    <property type="entry name" value="Urease_alpha_N_dom"/>
</dbReference>
<dbReference type="InterPro" id="IPR050112">
    <property type="entry name" value="Urease_alpha_subunit"/>
</dbReference>
<dbReference type="InterPro" id="IPR017950">
    <property type="entry name" value="Urease_AS"/>
</dbReference>
<dbReference type="InterPro" id="IPR005848">
    <property type="entry name" value="Urease_asu"/>
</dbReference>
<dbReference type="InterPro" id="IPR017951">
    <property type="entry name" value="Urease_asu_c"/>
</dbReference>
<dbReference type="InterPro" id="IPR029754">
    <property type="entry name" value="Urease_Ni-bd"/>
</dbReference>
<dbReference type="NCBIfam" id="NF009685">
    <property type="entry name" value="PRK13206.1"/>
    <property type="match status" value="1"/>
</dbReference>
<dbReference type="NCBIfam" id="NF009686">
    <property type="entry name" value="PRK13207.1"/>
    <property type="match status" value="1"/>
</dbReference>
<dbReference type="NCBIfam" id="TIGR01792">
    <property type="entry name" value="urease_alph"/>
    <property type="match status" value="1"/>
</dbReference>
<dbReference type="PANTHER" id="PTHR43440">
    <property type="entry name" value="UREASE"/>
    <property type="match status" value="1"/>
</dbReference>
<dbReference type="PANTHER" id="PTHR43440:SF1">
    <property type="entry name" value="UREASE"/>
    <property type="match status" value="1"/>
</dbReference>
<dbReference type="Pfam" id="PF01979">
    <property type="entry name" value="Amidohydro_1"/>
    <property type="match status" value="1"/>
</dbReference>
<dbReference type="Pfam" id="PF00449">
    <property type="entry name" value="Urease_alpha"/>
    <property type="match status" value="1"/>
</dbReference>
<dbReference type="PRINTS" id="PR01752">
    <property type="entry name" value="UREASE"/>
</dbReference>
<dbReference type="SUPFAM" id="SSF51338">
    <property type="entry name" value="Composite domain of metallo-dependent hydrolases"/>
    <property type="match status" value="2"/>
</dbReference>
<dbReference type="SUPFAM" id="SSF51556">
    <property type="entry name" value="Metallo-dependent hydrolases"/>
    <property type="match status" value="1"/>
</dbReference>
<dbReference type="PROSITE" id="PS01120">
    <property type="entry name" value="UREASE_1"/>
    <property type="match status" value="1"/>
</dbReference>
<dbReference type="PROSITE" id="PS00145">
    <property type="entry name" value="UREASE_2"/>
    <property type="match status" value="1"/>
</dbReference>
<dbReference type="PROSITE" id="PS51368">
    <property type="entry name" value="UREASE_3"/>
    <property type="match status" value="1"/>
</dbReference>